<gene>
    <name evidence="1" type="primary">wzyE</name>
    <name type="ordered locus">ECP_3985</name>
</gene>
<comment type="function">
    <text evidence="1">Probably involved in the polymerization of enterobacterial common antigen (ECA) trisaccharide repeat units.</text>
</comment>
<comment type="pathway">
    <text evidence="1">Bacterial outer membrane biogenesis; enterobacterial common antigen biosynthesis.</text>
</comment>
<comment type="subunit">
    <text evidence="1">Probably part of a complex composed of WzxE, WzyE and WzzE.</text>
</comment>
<comment type="subcellular location">
    <subcellularLocation>
        <location evidence="1">Cell inner membrane</location>
        <topology evidence="1">Multi-pass membrane protein</topology>
    </subcellularLocation>
</comment>
<comment type="similarity">
    <text evidence="1">Belongs to the WzyE family.</text>
</comment>
<organism>
    <name type="scientific">Escherichia coli O6:K15:H31 (strain 536 / UPEC)</name>
    <dbReference type="NCBI Taxonomy" id="362663"/>
    <lineage>
        <taxon>Bacteria</taxon>
        <taxon>Pseudomonadati</taxon>
        <taxon>Pseudomonadota</taxon>
        <taxon>Gammaproteobacteria</taxon>
        <taxon>Enterobacterales</taxon>
        <taxon>Enterobacteriaceae</taxon>
        <taxon>Escherichia</taxon>
    </lineage>
</organism>
<sequence length="450" mass="51493">MSLLQFSGLFVVWLLCTLFIATLTWFEFRRVRFNFNVFFSLLFLLTFFFGFPLTSVLVFRFDVGVAPPEILLQALLSAGCFYAVYYVTYKTRLRKRVADAPRRPLFTMNRVETNLTWVILMGIALVSVGIFFMHNGFLLFRLNSYSQIFSSEVSGVALKRFFYFFIPAMLVVYFLRQDSKAWLFFLVSTVAFGLLTYMIVGGTRANIIIAFAIFLFIGIIRGWISLWMLAAAGVLGIVGMFWLALKRYGMNVSGDEAFYTFLYLTRDTFSPWENLALLLQNYDNIDFQGLAPIVRDFYVFIPSWLWPGRPSMVLNSANYFTWEVLNNHSGLAISPTLIGSLVVMGGALFIPLGAIVVGLIIKWFDWLYELGNRETNRYKAAILHSFCFGAIFNMIVLAREGLDSFVSRVVFFIVVFGACLMIAKLLYWLFESAGLIHKRTKSSLRTQVEG</sequence>
<proteinExistence type="inferred from homology"/>
<name>WZYE_ECOL5</name>
<reference key="1">
    <citation type="journal article" date="2006" name="Mol. Microbiol.">
        <title>Role of pathogenicity island-associated integrases in the genome plasticity of uropathogenic Escherichia coli strain 536.</title>
        <authorList>
            <person name="Hochhut B."/>
            <person name="Wilde C."/>
            <person name="Balling G."/>
            <person name="Middendorf B."/>
            <person name="Dobrindt U."/>
            <person name="Brzuszkiewicz E."/>
            <person name="Gottschalk G."/>
            <person name="Carniel E."/>
            <person name="Hacker J."/>
        </authorList>
    </citation>
    <scope>NUCLEOTIDE SEQUENCE [LARGE SCALE GENOMIC DNA]</scope>
    <source>
        <strain>536 / UPEC</strain>
    </source>
</reference>
<keyword id="KW-0997">Cell inner membrane</keyword>
<keyword id="KW-1003">Cell membrane</keyword>
<keyword id="KW-0472">Membrane</keyword>
<keyword id="KW-0812">Transmembrane</keyword>
<keyword id="KW-1133">Transmembrane helix</keyword>
<accession>Q0TAT0</accession>
<dbReference type="EMBL" id="CP000247">
    <property type="protein sequence ID" value="ABG71949.1"/>
    <property type="molecule type" value="Genomic_DNA"/>
</dbReference>
<dbReference type="RefSeq" id="WP_000055119.1">
    <property type="nucleotide sequence ID" value="NC_008253.1"/>
</dbReference>
<dbReference type="KEGG" id="ecp:ECP_3985"/>
<dbReference type="HOGENOM" id="CLU_049711_0_0_6"/>
<dbReference type="UniPathway" id="UPA00566"/>
<dbReference type="Proteomes" id="UP000009182">
    <property type="component" value="Chromosome"/>
</dbReference>
<dbReference type="GO" id="GO:0005886">
    <property type="term" value="C:plasma membrane"/>
    <property type="evidence" value="ECO:0007669"/>
    <property type="project" value="UniProtKB-SubCell"/>
</dbReference>
<dbReference type="GO" id="GO:0009246">
    <property type="term" value="P:enterobacterial common antigen biosynthetic process"/>
    <property type="evidence" value="ECO:0007669"/>
    <property type="project" value="UniProtKB-UniRule"/>
</dbReference>
<dbReference type="HAMAP" id="MF_01003">
    <property type="entry name" value="WzyE"/>
    <property type="match status" value="1"/>
</dbReference>
<dbReference type="InterPro" id="IPR010691">
    <property type="entry name" value="WzyE"/>
</dbReference>
<dbReference type="NCBIfam" id="NF002820">
    <property type="entry name" value="PRK02975.1"/>
    <property type="match status" value="1"/>
</dbReference>
<dbReference type="Pfam" id="PF06899">
    <property type="entry name" value="WzyE"/>
    <property type="match status" value="1"/>
</dbReference>
<evidence type="ECO:0000255" key="1">
    <source>
        <dbReference type="HAMAP-Rule" id="MF_01003"/>
    </source>
</evidence>
<feature type="chain" id="PRO_1000062759" description="Probable ECA polymerase">
    <location>
        <begin position="1"/>
        <end position="450"/>
    </location>
</feature>
<feature type="transmembrane region" description="Helical" evidence="1">
    <location>
        <begin position="6"/>
        <end position="26"/>
    </location>
</feature>
<feature type="transmembrane region" description="Helical" evidence="1">
    <location>
        <begin position="37"/>
        <end position="57"/>
    </location>
</feature>
<feature type="transmembrane region" description="Helical" evidence="1">
    <location>
        <begin position="63"/>
        <end position="83"/>
    </location>
</feature>
<feature type="transmembrane region" description="Helical" evidence="1">
    <location>
        <begin position="118"/>
        <end position="138"/>
    </location>
</feature>
<feature type="transmembrane region" description="Helical" evidence="1">
    <location>
        <begin position="155"/>
        <end position="175"/>
    </location>
</feature>
<feature type="transmembrane region" description="Helical" evidence="1">
    <location>
        <begin position="181"/>
        <end position="201"/>
    </location>
</feature>
<feature type="transmembrane region" description="Helical" evidence="1">
    <location>
        <begin position="207"/>
        <end position="227"/>
    </location>
</feature>
<feature type="transmembrane region" description="Helical" evidence="1">
    <location>
        <begin position="228"/>
        <end position="248"/>
    </location>
</feature>
<feature type="transmembrane region" description="Helical" evidence="1">
    <location>
        <begin position="341"/>
        <end position="361"/>
    </location>
</feature>
<feature type="transmembrane region" description="Helical" evidence="1">
    <location>
        <begin position="378"/>
        <end position="398"/>
    </location>
</feature>
<feature type="transmembrane region" description="Helical" evidence="1">
    <location>
        <begin position="410"/>
        <end position="430"/>
    </location>
</feature>
<protein>
    <recommendedName>
        <fullName evidence="1">Probable ECA polymerase</fullName>
    </recommendedName>
</protein>